<proteinExistence type="inferred from homology"/>
<sequence>MAFNFNWSPLMADASFYTRAQDLLTAALNKSPKPPIIVDDIIVTELNLGSIPPELEILEIGDLAEDRFRGIFKMSYSGDAFLTLKTRVQANPLNTYLLTRPSFASPLPLAAATPLTIPLQITLSDFKLSGFVILVFSKQKGITVVFRNDPLESLKVSSTFDSIPFVRDFLQREIEAQLRILFMDELPAIIHRLSLRLWVPEYRAGEEDQDQNTNTAGEGPGQDPLASPPQDPVDALGNALNESEIASLSLDSSVETHSLFSQKNLLRLAALTDSQRTLSLFTPSIQEVVYRAWTSPSDQGDISGGVTSPLSPALSRTQSQVGGMSSFQDNASTISSYSRTSTSTHTFSTYGLNLGAGRHSKAHARKRKKRVVDLRRPKQPESETASVTDESSFTETTSAPSVRSAPLPRVNEQPDDPVTPPLSPDSDFHLPPIPERHRFSISRPALRRDIATEMLRETGESSSEPARRHAEVDDIDATPRTIIRHEPSRYEGEKQEAGPSRQLPSTILPFTEEKSTPGPVDQALVERIAGEIARRMREDKLMGTNSCAFWNRPGHEESPPPAYGQ</sequence>
<feature type="chain" id="PRO_0000384330" description="Mitochondrial distribution and morphology protein 34">
    <location>
        <begin position="1"/>
        <end position="565"/>
    </location>
</feature>
<feature type="domain" description="SMP-LTD" evidence="1">
    <location>
        <begin position="1"/>
        <end position="195"/>
    </location>
</feature>
<feature type="region of interest" description="Disordered" evidence="2">
    <location>
        <begin position="207"/>
        <end position="236"/>
    </location>
</feature>
<feature type="region of interest" description="Disordered" evidence="2">
    <location>
        <begin position="296"/>
        <end position="317"/>
    </location>
</feature>
<feature type="region of interest" description="Disordered" evidence="2">
    <location>
        <begin position="348"/>
        <end position="504"/>
    </location>
</feature>
<feature type="compositionally biased region" description="Basic residues" evidence="2">
    <location>
        <begin position="358"/>
        <end position="370"/>
    </location>
</feature>
<feature type="compositionally biased region" description="Basic and acidic residues" evidence="2">
    <location>
        <begin position="371"/>
        <end position="381"/>
    </location>
</feature>
<feature type="compositionally biased region" description="Polar residues" evidence="2">
    <location>
        <begin position="382"/>
        <end position="401"/>
    </location>
</feature>
<feature type="compositionally biased region" description="Basic and acidic residues" evidence="2">
    <location>
        <begin position="446"/>
        <end position="472"/>
    </location>
</feature>
<feature type="compositionally biased region" description="Basic and acidic residues" evidence="2">
    <location>
        <begin position="483"/>
        <end position="496"/>
    </location>
</feature>
<organism>
    <name type="scientific">Aspergillus terreus (strain NIH 2624 / FGSC A1156)</name>
    <dbReference type="NCBI Taxonomy" id="341663"/>
    <lineage>
        <taxon>Eukaryota</taxon>
        <taxon>Fungi</taxon>
        <taxon>Dikarya</taxon>
        <taxon>Ascomycota</taxon>
        <taxon>Pezizomycotina</taxon>
        <taxon>Eurotiomycetes</taxon>
        <taxon>Eurotiomycetidae</taxon>
        <taxon>Eurotiales</taxon>
        <taxon>Aspergillaceae</taxon>
        <taxon>Aspergillus</taxon>
        <taxon>Aspergillus subgen. Circumdati</taxon>
    </lineage>
</organism>
<dbReference type="EMBL" id="CH476594">
    <property type="protein sequence ID" value="EAU39393.1"/>
    <property type="status" value="ALT_SEQ"/>
    <property type="molecule type" value="Genomic_DNA"/>
</dbReference>
<dbReference type="RefSeq" id="XP_001210833.1">
    <property type="nucleotide sequence ID" value="XM_001210833.1"/>
</dbReference>
<dbReference type="SMR" id="Q0CZY7"/>
<dbReference type="STRING" id="341663.Q0CZY7"/>
<dbReference type="GeneID" id="4355502"/>
<dbReference type="eggNOG" id="ENOG502QT3W">
    <property type="taxonomic scope" value="Eukaryota"/>
</dbReference>
<dbReference type="OrthoDB" id="17927at2759"/>
<dbReference type="Proteomes" id="UP000007963">
    <property type="component" value="Unassembled WGS sequence"/>
</dbReference>
<dbReference type="GO" id="GO:0032865">
    <property type="term" value="C:ERMES complex"/>
    <property type="evidence" value="ECO:0007669"/>
    <property type="project" value="UniProtKB-UniRule"/>
</dbReference>
<dbReference type="GO" id="GO:0008289">
    <property type="term" value="F:lipid binding"/>
    <property type="evidence" value="ECO:0007669"/>
    <property type="project" value="UniProtKB-KW"/>
</dbReference>
<dbReference type="GO" id="GO:0000002">
    <property type="term" value="P:mitochondrial genome maintenance"/>
    <property type="evidence" value="ECO:0007669"/>
    <property type="project" value="UniProtKB-UniRule"/>
</dbReference>
<dbReference type="GO" id="GO:1990456">
    <property type="term" value="P:mitochondrion-endoplasmic reticulum membrane tethering"/>
    <property type="evidence" value="ECO:0007669"/>
    <property type="project" value="TreeGrafter"/>
</dbReference>
<dbReference type="GO" id="GO:0015914">
    <property type="term" value="P:phospholipid transport"/>
    <property type="evidence" value="ECO:0007669"/>
    <property type="project" value="TreeGrafter"/>
</dbReference>
<dbReference type="CDD" id="cd21673">
    <property type="entry name" value="SMP_Mdm34"/>
    <property type="match status" value="1"/>
</dbReference>
<dbReference type="HAMAP" id="MF_03105">
    <property type="entry name" value="Mdm34"/>
    <property type="match status" value="1"/>
</dbReference>
<dbReference type="InterPro" id="IPR027536">
    <property type="entry name" value="Mdm34"/>
</dbReference>
<dbReference type="InterPro" id="IPR031468">
    <property type="entry name" value="SMP_LBD"/>
</dbReference>
<dbReference type="PANTHER" id="PTHR28185">
    <property type="entry name" value="MITOCHONDRIAL DISTRIBUTION AND MORPHOLOGY PROTEIN 34"/>
    <property type="match status" value="1"/>
</dbReference>
<dbReference type="PANTHER" id="PTHR28185:SF1">
    <property type="entry name" value="MITOCHONDRIAL DISTRIBUTION AND MORPHOLOGY PROTEIN 34"/>
    <property type="match status" value="1"/>
</dbReference>
<dbReference type="PROSITE" id="PS51847">
    <property type="entry name" value="SMP"/>
    <property type="match status" value="1"/>
</dbReference>
<keyword id="KW-0445">Lipid transport</keyword>
<keyword id="KW-0446">Lipid-binding</keyword>
<keyword id="KW-0472">Membrane</keyword>
<keyword id="KW-0496">Mitochondrion</keyword>
<keyword id="KW-1000">Mitochondrion outer membrane</keyword>
<keyword id="KW-1185">Reference proteome</keyword>
<keyword id="KW-0812">Transmembrane</keyword>
<keyword id="KW-1134">Transmembrane beta strand</keyword>
<keyword id="KW-0813">Transport</keyword>
<name>MDM34_ASPTN</name>
<reference key="1">
    <citation type="submission" date="2005-09" db="EMBL/GenBank/DDBJ databases">
        <title>Annotation of the Aspergillus terreus NIH2624 genome.</title>
        <authorList>
            <person name="Birren B.W."/>
            <person name="Lander E.S."/>
            <person name="Galagan J.E."/>
            <person name="Nusbaum C."/>
            <person name="Devon K."/>
            <person name="Henn M."/>
            <person name="Ma L.-J."/>
            <person name="Jaffe D.B."/>
            <person name="Butler J."/>
            <person name="Alvarez P."/>
            <person name="Gnerre S."/>
            <person name="Grabherr M."/>
            <person name="Kleber M."/>
            <person name="Mauceli E.W."/>
            <person name="Brockman W."/>
            <person name="Rounsley S."/>
            <person name="Young S.K."/>
            <person name="LaButti K."/>
            <person name="Pushparaj V."/>
            <person name="DeCaprio D."/>
            <person name="Crawford M."/>
            <person name="Koehrsen M."/>
            <person name="Engels R."/>
            <person name="Montgomery P."/>
            <person name="Pearson M."/>
            <person name="Howarth C."/>
            <person name="Larson L."/>
            <person name="Luoma S."/>
            <person name="White J."/>
            <person name="Alvarado L."/>
            <person name="Kodira C.D."/>
            <person name="Zeng Q."/>
            <person name="Oleary S."/>
            <person name="Yandava C."/>
            <person name="Denning D.W."/>
            <person name="Nierman W.C."/>
            <person name="Milne T."/>
            <person name="Madden K."/>
        </authorList>
    </citation>
    <scope>NUCLEOTIDE SEQUENCE [LARGE SCALE GENOMIC DNA]</scope>
    <source>
        <strain>NIH 2624 / FGSC A1156</strain>
    </source>
</reference>
<comment type="function">
    <text evidence="1">Component of the ERMES/MDM complex, which serves as a molecular tether to connect the endoplasmic reticulum (ER) and mitochondria. Components of this complex are involved in the control of mitochondrial shape and protein biogenesis, and function in nonvesicular lipid trafficking between the ER and mitochondria. Mdm34 is required for the interaction of the ER-resident membrane protein mmm1 and the outer mitochondrial membrane-resident beta-barrel protein mdm10.</text>
</comment>
<comment type="subunit">
    <text evidence="1">Component of the ER-mitochondria encounter structure (ERMES) or MDM complex, composed of mmm1, mdm10, mdm12 and mdm34.</text>
</comment>
<comment type="subcellular location">
    <subcellularLocation>
        <location evidence="1">Mitochondrion outer membrane</location>
        <topology evidence="1">Multi-pass membrane protein</topology>
    </subcellularLocation>
    <text evidence="1">The ERMES/MDM complex localizes to a few discrete foci (around 10 per single cell), that represent mitochondria-endoplasmic reticulum junctions. These foci are often found next to mtDNA nucleoids.</text>
</comment>
<comment type="domain">
    <text evidence="1">Lacks alpha-helical transmembrane segments, suggesting that it resides in the membrane via beta-sheet conformations similar to those predicted for other outer membrane proteins and porin.</text>
</comment>
<comment type="domain">
    <text evidence="1">The SMP-LTD domain is a barrel-like domain that can bind various types of glycerophospholipids in its interior and mediate their transfer between two adjacent bilayers.</text>
</comment>
<comment type="similarity">
    <text evidence="1">Belongs to the MDM34 family.</text>
</comment>
<comment type="sequence caution" evidence="3">
    <conflict type="erroneous gene model prediction">
        <sequence resource="EMBL-CDS" id="EAU39393"/>
    </conflict>
</comment>
<comment type="sequence caution" evidence="3">
    <conflict type="frameshift">
        <sequence resource="EMBL-CDS" id="EAU39393"/>
    </conflict>
</comment>
<evidence type="ECO:0000255" key="1">
    <source>
        <dbReference type="HAMAP-Rule" id="MF_03105"/>
    </source>
</evidence>
<evidence type="ECO:0000256" key="2">
    <source>
        <dbReference type="SAM" id="MobiDB-lite"/>
    </source>
</evidence>
<evidence type="ECO:0000305" key="3"/>
<protein>
    <recommendedName>
        <fullName evidence="1">Mitochondrial distribution and morphology protein 34</fullName>
    </recommendedName>
</protein>
<accession>Q0CZY7</accession>
<gene>
    <name evidence="1" type="primary">mdm34</name>
    <name type="ORF">ATEG_00747</name>
</gene>